<organism>
    <name type="scientific">Escherichia coli O139:H28 (strain E24377A / ETEC)</name>
    <dbReference type="NCBI Taxonomy" id="331111"/>
    <lineage>
        <taxon>Bacteria</taxon>
        <taxon>Pseudomonadati</taxon>
        <taxon>Pseudomonadota</taxon>
        <taxon>Gammaproteobacteria</taxon>
        <taxon>Enterobacterales</taxon>
        <taxon>Enterobacteriaceae</taxon>
        <taxon>Escherichia</taxon>
    </lineage>
</organism>
<comment type="function">
    <text evidence="1">Binds together with bS18 to 16S ribosomal RNA.</text>
</comment>
<comment type="similarity">
    <text evidence="1">Belongs to the bacterial ribosomal protein bS6 family.</text>
</comment>
<evidence type="ECO:0000255" key="1">
    <source>
        <dbReference type="HAMAP-Rule" id="MF_00360"/>
    </source>
</evidence>
<evidence type="ECO:0000256" key="2">
    <source>
        <dbReference type="SAM" id="MobiDB-lite"/>
    </source>
</evidence>
<evidence type="ECO:0000305" key="3"/>
<keyword id="KW-0007">Acetylation</keyword>
<keyword id="KW-1185">Reference proteome</keyword>
<keyword id="KW-0687">Ribonucleoprotein</keyword>
<keyword id="KW-0689">Ribosomal protein</keyword>
<keyword id="KW-0694">RNA-binding</keyword>
<keyword id="KW-0699">rRNA-binding</keyword>
<protein>
    <recommendedName>
        <fullName evidence="1">Small ribosomal subunit protein bS6</fullName>
    </recommendedName>
    <alternativeName>
        <fullName evidence="3">30S ribosomal protein S6</fullName>
    </alternativeName>
</protein>
<sequence>MRHYEIVFMVHPDQSEQVPGMIERYTAAITGAEGKIHRLEDWGRRQLAYPINKLHKAHYVLMNVEAPQEVIDELETTFRFNDAVIRSMVMRTKHAVTEASPMVKAKDERRERRDDFANETADDAEAGDSEE</sequence>
<proteinExistence type="inferred from homology"/>
<dbReference type="EMBL" id="CP000800">
    <property type="protein sequence ID" value="ABV19548.1"/>
    <property type="molecule type" value="Genomic_DNA"/>
</dbReference>
<dbReference type="RefSeq" id="WP_001216676.1">
    <property type="nucleotide sequence ID" value="NC_009801.1"/>
</dbReference>
<dbReference type="SMR" id="A7ZV71"/>
<dbReference type="GeneID" id="93777623"/>
<dbReference type="KEGG" id="ecw:EcE24377A_4761"/>
<dbReference type="HOGENOM" id="CLU_113441_6_1_6"/>
<dbReference type="Proteomes" id="UP000001122">
    <property type="component" value="Chromosome"/>
</dbReference>
<dbReference type="GO" id="GO:0022627">
    <property type="term" value="C:cytosolic small ribosomal subunit"/>
    <property type="evidence" value="ECO:0007669"/>
    <property type="project" value="TreeGrafter"/>
</dbReference>
<dbReference type="GO" id="GO:0070181">
    <property type="term" value="F:small ribosomal subunit rRNA binding"/>
    <property type="evidence" value="ECO:0007669"/>
    <property type="project" value="TreeGrafter"/>
</dbReference>
<dbReference type="GO" id="GO:0003735">
    <property type="term" value="F:structural constituent of ribosome"/>
    <property type="evidence" value="ECO:0007669"/>
    <property type="project" value="InterPro"/>
</dbReference>
<dbReference type="GO" id="GO:0006412">
    <property type="term" value="P:translation"/>
    <property type="evidence" value="ECO:0007669"/>
    <property type="project" value="UniProtKB-UniRule"/>
</dbReference>
<dbReference type="CDD" id="cd00473">
    <property type="entry name" value="bS6"/>
    <property type="match status" value="1"/>
</dbReference>
<dbReference type="FunFam" id="3.30.70.60:FF:000003">
    <property type="entry name" value="30S ribosomal protein S6"/>
    <property type="match status" value="1"/>
</dbReference>
<dbReference type="Gene3D" id="3.30.70.60">
    <property type="match status" value="1"/>
</dbReference>
<dbReference type="HAMAP" id="MF_00360">
    <property type="entry name" value="Ribosomal_bS6"/>
    <property type="match status" value="1"/>
</dbReference>
<dbReference type="InterPro" id="IPR000529">
    <property type="entry name" value="Ribosomal_bS6"/>
</dbReference>
<dbReference type="InterPro" id="IPR020815">
    <property type="entry name" value="Ribosomal_bS6_CS"/>
</dbReference>
<dbReference type="InterPro" id="IPR035980">
    <property type="entry name" value="Ribosomal_bS6_sf"/>
</dbReference>
<dbReference type="InterPro" id="IPR020814">
    <property type="entry name" value="Ribosomal_S6_plastid/chlpt"/>
</dbReference>
<dbReference type="InterPro" id="IPR014717">
    <property type="entry name" value="Transl_elong_EF1B/ribsomal_bS6"/>
</dbReference>
<dbReference type="NCBIfam" id="TIGR00166">
    <property type="entry name" value="S6"/>
    <property type="match status" value="1"/>
</dbReference>
<dbReference type="PANTHER" id="PTHR21011">
    <property type="entry name" value="MITOCHONDRIAL 28S RIBOSOMAL PROTEIN S6"/>
    <property type="match status" value="1"/>
</dbReference>
<dbReference type="PANTHER" id="PTHR21011:SF1">
    <property type="entry name" value="SMALL RIBOSOMAL SUBUNIT PROTEIN BS6M"/>
    <property type="match status" value="1"/>
</dbReference>
<dbReference type="Pfam" id="PF01250">
    <property type="entry name" value="Ribosomal_S6"/>
    <property type="match status" value="1"/>
</dbReference>
<dbReference type="SUPFAM" id="SSF54995">
    <property type="entry name" value="Ribosomal protein S6"/>
    <property type="match status" value="1"/>
</dbReference>
<dbReference type="PROSITE" id="PS01048">
    <property type="entry name" value="RIBOSOMAL_S6"/>
    <property type="match status" value="1"/>
</dbReference>
<feature type="chain" id="PRO_1000059855" description="Small ribosomal subunit protein bS6">
    <location>
        <begin position="1"/>
        <end position="131"/>
    </location>
</feature>
<feature type="region of interest" description="Disordered" evidence="2">
    <location>
        <begin position="98"/>
        <end position="131"/>
    </location>
</feature>
<feature type="compositionally biased region" description="Basic and acidic residues" evidence="2">
    <location>
        <begin position="104"/>
        <end position="116"/>
    </location>
</feature>
<feature type="compositionally biased region" description="Acidic residues" evidence="2">
    <location>
        <begin position="120"/>
        <end position="131"/>
    </location>
</feature>
<feature type="modified residue" description="N6-acetyllysine" evidence="1">
    <location>
        <position position="93"/>
    </location>
</feature>
<reference key="1">
    <citation type="journal article" date="2008" name="J. Bacteriol.">
        <title>The pangenome structure of Escherichia coli: comparative genomic analysis of E. coli commensal and pathogenic isolates.</title>
        <authorList>
            <person name="Rasko D.A."/>
            <person name="Rosovitz M.J."/>
            <person name="Myers G.S.A."/>
            <person name="Mongodin E.F."/>
            <person name="Fricke W.F."/>
            <person name="Gajer P."/>
            <person name="Crabtree J."/>
            <person name="Sebaihia M."/>
            <person name="Thomson N.R."/>
            <person name="Chaudhuri R."/>
            <person name="Henderson I.R."/>
            <person name="Sperandio V."/>
            <person name="Ravel J."/>
        </authorList>
    </citation>
    <scope>NUCLEOTIDE SEQUENCE [LARGE SCALE GENOMIC DNA]</scope>
    <source>
        <strain>E24377A / ETEC</strain>
    </source>
</reference>
<accession>A7ZV71</accession>
<name>RS6_ECO24</name>
<gene>
    <name evidence="1" type="primary">rpsF</name>
    <name type="ordered locus">EcE24377A_4761</name>
</gene>